<proteinExistence type="inferred from homology"/>
<sequence>MAKKSKIAKERKRQQMVEKYAELRRELKAKGDYEAIRKLPRDSSPTRLTGRCEVTGRPRGYMRQFKMSRIAFREYAHKGQIPGVKKSSW</sequence>
<name>RS14_OCEIH</name>
<dbReference type="EMBL" id="BA000028">
    <property type="protein sequence ID" value="BAC15388.1"/>
    <property type="molecule type" value="Genomic_DNA"/>
</dbReference>
<dbReference type="RefSeq" id="WP_011067830.1">
    <property type="nucleotide sequence ID" value="NC_004193.1"/>
</dbReference>
<dbReference type="SMR" id="Q8EL00"/>
<dbReference type="STRING" id="221109.gene:10735684"/>
<dbReference type="KEGG" id="oih:OB3432"/>
<dbReference type="eggNOG" id="COG0199">
    <property type="taxonomic scope" value="Bacteria"/>
</dbReference>
<dbReference type="HOGENOM" id="CLU_139869_0_0_9"/>
<dbReference type="OrthoDB" id="9810484at2"/>
<dbReference type="PhylomeDB" id="Q8EL00"/>
<dbReference type="Proteomes" id="UP000000822">
    <property type="component" value="Chromosome"/>
</dbReference>
<dbReference type="GO" id="GO:0005737">
    <property type="term" value="C:cytoplasm"/>
    <property type="evidence" value="ECO:0007669"/>
    <property type="project" value="UniProtKB-ARBA"/>
</dbReference>
<dbReference type="GO" id="GO:0015935">
    <property type="term" value="C:small ribosomal subunit"/>
    <property type="evidence" value="ECO:0007669"/>
    <property type="project" value="TreeGrafter"/>
</dbReference>
<dbReference type="GO" id="GO:0019843">
    <property type="term" value="F:rRNA binding"/>
    <property type="evidence" value="ECO:0007669"/>
    <property type="project" value="UniProtKB-UniRule"/>
</dbReference>
<dbReference type="GO" id="GO:0003735">
    <property type="term" value="F:structural constituent of ribosome"/>
    <property type="evidence" value="ECO:0007669"/>
    <property type="project" value="InterPro"/>
</dbReference>
<dbReference type="GO" id="GO:0006412">
    <property type="term" value="P:translation"/>
    <property type="evidence" value="ECO:0007669"/>
    <property type="project" value="UniProtKB-UniRule"/>
</dbReference>
<dbReference type="FunFam" id="4.10.830.10:FF:000003">
    <property type="entry name" value="30S ribosomal protein S14"/>
    <property type="match status" value="1"/>
</dbReference>
<dbReference type="Gene3D" id="4.10.830.10">
    <property type="entry name" value="30s Ribosomal Protein S14, Chain N"/>
    <property type="match status" value="1"/>
</dbReference>
<dbReference type="HAMAP" id="MF_00537">
    <property type="entry name" value="Ribosomal_uS14_1"/>
    <property type="match status" value="1"/>
</dbReference>
<dbReference type="InterPro" id="IPR001209">
    <property type="entry name" value="Ribosomal_uS14"/>
</dbReference>
<dbReference type="InterPro" id="IPR023036">
    <property type="entry name" value="Ribosomal_uS14_bac/plastid"/>
</dbReference>
<dbReference type="InterPro" id="IPR018271">
    <property type="entry name" value="Ribosomal_uS14_CS"/>
</dbReference>
<dbReference type="InterPro" id="IPR043140">
    <property type="entry name" value="Ribosomal_uS14_sf"/>
</dbReference>
<dbReference type="NCBIfam" id="NF006477">
    <property type="entry name" value="PRK08881.1"/>
    <property type="match status" value="1"/>
</dbReference>
<dbReference type="PANTHER" id="PTHR19836">
    <property type="entry name" value="30S RIBOSOMAL PROTEIN S14"/>
    <property type="match status" value="1"/>
</dbReference>
<dbReference type="PANTHER" id="PTHR19836:SF19">
    <property type="entry name" value="SMALL RIBOSOMAL SUBUNIT PROTEIN US14M"/>
    <property type="match status" value="1"/>
</dbReference>
<dbReference type="Pfam" id="PF00253">
    <property type="entry name" value="Ribosomal_S14"/>
    <property type="match status" value="1"/>
</dbReference>
<dbReference type="SUPFAM" id="SSF57716">
    <property type="entry name" value="Glucocorticoid receptor-like (DNA-binding domain)"/>
    <property type="match status" value="1"/>
</dbReference>
<dbReference type="PROSITE" id="PS00527">
    <property type="entry name" value="RIBOSOMAL_S14"/>
    <property type="match status" value="1"/>
</dbReference>
<comment type="function">
    <text evidence="1">Binds 16S rRNA, required for the assembly of 30S particles and may also be responsible for determining the conformation of the 16S rRNA at the A site.</text>
</comment>
<comment type="subunit">
    <text evidence="1">Part of the 30S ribosomal subunit. Contacts proteins S3 and S10.</text>
</comment>
<comment type="similarity">
    <text evidence="1">Belongs to the universal ribosomal protein uS14 family.</text>
</comment>
<accession>Q8EL00</accession>
<keyword id="KW-1185">Reference proteome</keyword>
<keyword id="KW-0687">Ribonucleoprotein</keyword>
<keyword id="KW-0689">Ribosomal protein</keyword>
<keyword id="KW-0694">RNA-binding</keyword>
<keyword id="KW-0699">rRNA-binding</keyword>
<evidence type="ECO:0000255" key="1">
    <source>
        <dbReference type="HAMAP-Rule" id="MF_00537"/>
    </source>
</evidence>
<evidence type="ECO:0000305" key="2"/>
<reference key="1">
    <citation type="journal article" date="2002" name="Nucleic Acids Res.">
        <title>Genome sequence of Oceanobacillus iheyensis isolated from the Iheya Ridge and its unexpected adaptive capabilities to extreme environments.</title>
        <authorList>
            <person name="Takami H."/>
            <person name="Takaki Y."/>
            <person name="Uchiyama I."/>
        </authorList>
    </citation>
    <scope>NUCLEOTIDE SEQUENCE [LARGE SCALE GENOMIC DNA]</scope>
    <source>
        <strain>DSM 14371 / CIP 107618 / JCM 11309 / KCTC 3954 / HTE831</strain>
    </source>
</reference>
<protein>
    <recommendedName>
        <fullName evidence="1">Small ribosomal subunit protein uS14A</fullName>
    </recommendedName>
    <alternativeName>
        <fullName evidence="2">30S ribosomal protein S14</fullName>
    </alternativeName>
</protein>
<organism>
    <name type="scientific">Oceanobacillus iheyensis (strain DSM 14371 / CIP 107618 / JCM 11309 / KCTC 3954 / HTE831)</name>
    <dbReference type="NCBI Taxonomy" id="221109"/>
    <lineage>
        <taxon>Bacteria</taxon>
        <taxon>Bacillati</taxon>
        <taxon>Bacillota</taxon>
        <taxon>Bacilli</taxon>
        <taxon>Bacillales</taxon>
        <taxon>Bacillaceae</taxon>
        <taxon>Oceanobacillus</taxon>
    </lineage>
</organism>
<feature type="chain" id="PRO_0000269056" description="Small ribosomal subunit protein uS14A">
    <location>
        <begin position="1"/>
        <end position="89"/>
    </location>
</feature>
<gene>
    <name evidence="1" type="primary">rpsN</name>
    <name type="synonym">rpsN2</name>
    <name type="ordered locus">OB3432</name>
</gene>